<proteinExistence type="inferred from homology"/>
<accession>Q9KA26</accession>
<protein>
    <recommendedName>
        <fullName evidence="1">ATP-dependent protease subunit HslV</fullName>
        <ecNumber evidence="1">3.4.25.2</ecNumber>
    </recommendedName>
</protein>
<keyword id="KW-0021">Allosteric enzyme</keyword>
<keyword id="KW-0963">Cytoplasm</keyword>
<keyword id="KW-0378">Hydrolase</keyword>
<keyword id="KW-0479">Metal-binding</keyword>
<keyword id="KW-0645">Protease</keyword>
<keyword id="KW-1185">Reference proteome</keyword>
<keyword id="KW-0915">Sodium</keyword>
<keyword id="KW-0888">Threonine protease</keyword>
<organism>
    <name type="scientific">Halalkalibacterium halodurans (strain ATCC BAA-125 / DSM 18197 / FERM 7344 / JCM 9153 / C-125)</name>
    <name type="common">Bacillus halodurans</name>
    <dbReference type="NCBI Taxonomy" id="272558"/>
    <lineage>
        <taxon>Bacteria</taxon>
        <taxon>Bacillati</taxon>
        <taxon>Bacillota</taxon>
        <taxon>Bacilli</taxon>
        <taxon>Bacillales</taxon>
        <taxon>Bacillaceae</taxon>
        <taxon>Halalkalibacterium (ex Joshi et al. 2022)</taxon>
    </lineage>
</organism>
<reference key="1">
    <citation type="journal article" date="2000" name="Nucleic Acids Res.">
        <title>Complete genome sequence of the alkaliphilic bacterium Bacillus halodurans and genomic sequence comparison with Bacillus subtilis.</title>
        <authorList>
            <person name="Takami H."/>
            <person name="Nakasone K."/>
            <person name="Takaki Y."/>
            <person name="Maeno G."/>
            <person name="Sasaki R."/>
            <person name="Masui N."/>
            <person name="Fuji F."/>
            <person name="Hirama C."/>
            <person name="Nakamura Y."/>
            <person name="Ogasawara N."/>
            <person name="Kuhara S."/>
            <person name="Horikoshi K."/>
        </authorList>
    </citation>
    <scope>NUCLEOTIDE SEQUENCE [LARGE SCALE GENOMIC DNA]</scope>
    <source>
        <strain>ATCC BAA-125 / DSM 18197 / FERM 7344 / JCM 9153 / C-125</strain>
    </source>
</reference>
<sequence length="180" mass="19545">MEMTFHATTIFAIHHNGKCAMAGDGQVTFGNAVVMKHTARKVRKIYHGKVLAGFAGSVADAFTLFEKFEAKLEEFNGNLQRSAVEVAKEWRSDKVLRRLEAMLIVMNEEHLLLVSGTGEVIEPDDGILAIGSGGNYALAAGRALKKKAPQLSAREIAQAALETAGDICVYTNDQLIVEEL</sequence>
<dbReference type="EC" id="3.4.25.2" evidence="1"/>
<dbReference type="EMBL" id="BA000004">
    <property type="protein sequence ID" value="BAB06183.1"/>
    <property type="molecule type" value="Genomic_DNA"/>
</dbReference>
<dbReference type="PIR" id="H83957">
    <property type="entry name" value="H83957"/>
</dbReference>
<dbReference type="RefSeq" id="WP_010898617.1">
    <property type="nucleotide sequence ID" value="NC_002570.2"/>
</dbReference>
<dbReference type="SMR" id="Q9KA26"/>
<dbReference type="STRING" id="272558.gene:10728362"/>
<dbReference type="MEROPS" id="T01.007"/>
<dbReference type="GeneID" id="87597985"/>
<dbReference type="KEGG" id="bha:BH2464"/>
<dbReference type="eggNOG" id="COG5405">
    <property type="taxonomic scope" value="Bacteria"/>
</dbReference>
<dbReference type="HOGENOM" id="CLU_093872_1_0_9"/>
<dbReference type="OrthoDB" id="9804884at2"/>
<dbReference type="Proteomes" id="UP000001258">
    <property type="component" value="Chromosome"/>
</dbReference>
<dbReference type="GO" id="GO:0009376">
    <property type="term" value="C:HslUV protease complex"/>
    <property type="evidence" value="ECO:0007669"/>
    <property type="project" value="UniProtKB-UniRule"/>
</dbReference>
<dbReference type="GO" id="GO:0005839">
    <property type="term" value="C:proteasome core complex"/>
    <property type="evidence" value="ECO:0007669"/>
    <property type="project" value="InterPro"/>
</dbReference>
<dbReference type="GO" id="GO:0046872">
    <property type="term" value="F:metal ion binding"/>
    <property type="evidence" value="ECO:0007669"/>
    <property type="project" value="UniProtKB-KW"/>
</dbReference>
<dbReference type="GO" id="GO:0004298">
    <property type="term" value="F:threonine-type endopeptidase activity"/>
    <property type="evidence" value="ECO:0007669"/>
    <property type="project" value="UniProtKB-KW"/>
</dbReference>
<dbReference type="GO" id="GO:0051603">
    <property type="term" value="P:proteolysis involved in protein catabolic process"/>
    <property type="evidence" value="ECO:0007669"/>
    <property type="project" value="InterPro"/>
</dbReference>
<dbReference type="CDD" id="cd01913">
    <property type="entry name" value="protease_HslV"/>
    <property type="match status" value="1"/>
</dbReference>
<dbReference type="Gene3D" id="3.60.20.10">
    <property type="entry name" value="Glutamine Phosphoribosylpyrophosphate, subunit 1, domain 1"/>
    <property type="match status" value="1"/>
</dbReference>
<dbReference type="HAMAP" id="MF_00248">
    <property type="entry name" value="HslV"/>
    <property type="match status" value="1"/>
</dbReference>
<dbReference type="InterPro" id="IPR022281">
    <property type="entry name" value="ATP-dep_Prtase_HsIV_su"/>
</dbReference>
<dbReference type="InterPro" id="IPR029055">
    <property type="entry name" value="Ntn_hydrolases_N"/>
</dbReference>
<dbReference type="InterPro" id="IPR001353">
    <property type="entry name" value="Proteasome_sua/b"/>
</dbReference>
<dbReference type="InterPro" id="IPR023333">
    <property type="entry name" value="Proteasome_suB-type"/>
</dbReference>
<dbReference type="NCBIfam" id="TIGR03692">
    <property type="entry name" value="ATP_dep_HslV"/>
    <property type="match status" value="1"/>
</dbReference>
<dbReference type="NCBIfam" id="NF003964">
    <property type="entry name" value="PRK05456.1"/>
    <property type="match status" value="1"/>
</dbReference>
<dbReference type="PANTHER" id="PTHR32194:SF0">
    <property type="entry name" value="ATP-DEPENDENT PROTEASE SUBUNIT HSLV"/>
    <property type="match status" value="1"/>
</dbReference>
<dbReference type="PANTHER" id="PTHR32194">
    <property type="entry name" value="METALLOPROTEASE TLDD"/>
    <property type="match status" value="1"/>
</dbReference>
<dbReference type="Pfam" id="PF00227">
    <property type="entry name" value="Proteasome"/>
    <property type="match status" value="1"/>
</dbReference>
<dbReference type="PIRSF" id="PIRSF039093">
    <property type="entry name" value="HslV"/>
    <property type="match status" value="1"/>
</dbReference>
<dbReference type="SUPFAM" id="SSF56235">
    <property type="entry name" value="N-terminal nucleophile aminohydrolases (Ntn hydrolases)"/>
    <property type="match status" value="1"/>
</dbReference>
<dbReference type="PROSITE" id="PS51476">
    <property type="entry name" value="PROTEASOME_BETA_2"/>
    <property type="match status" value="1"/>
</dbReference>
<comment type="function">
    <text evidence="1">Protease subunit of a proteasome-like degradation complex believed to be a general protein degrading machinery.</text>
</comment>
<comment type="catalytic activity">
    <reaction evidence="1">
        <text>ATP-dependent cleavage of peptide bonds with broad specificity.</text>
        <dbReference type="EC" id="3.4.25.2"/>
    </reaction>
</comment>
<comment type="activity regulation">
    <text evidence="1">Allosterically activated by HslU binding.</text>
</comment>
<comment type="subunit">
    <text evidence="1">A double ring-shaped homohexamer of HslV is capped on each side by a ring-shaped HslU homohexamer. The assembly of the HslU/HslV complex is dependent on binding of ATP.</text>
</comment>
<comment type="subcellular location">
    <subcellularLocation>
        <location evidence="1">Cytoplasm</location>
    </subcellularLocation>
</comment>
<comment type="similarity">
    <text evidence="1">Belongs to the peptidase T1B family. HslV subfamily.</text>
</comment>
<name>HSLV_HALH5</name>
<gene>
    <name evidence="1" type="primary">hslV</name>
    <name type="synonym">clpQ</name>
    <name type="ordered locus">BH2464</name>
</gene>
<evidence type="ECO:0000255" key="1">
    <source>
        <dbReference type="HAMAP-Rule" id="MF_00248"/>
    </source>
</evidence>
<feature type="chain" id="PRO_0000148081" description="ATP-dependent protease subunit HslV">
    <location>
        <begin position="1"/>
        <end position="180"/>
    </location>
</feature>
<feature type="active site" evidence="1">
    <location>
        <position position="8"/>
    </location>
</feature>
<feature type="binding site" evidence="1">
    <location>
        <position position="165"/>
    </location>
    <ligand>
        <name>Na(+)</name>
        <dbReference type="ChEBI" id="CHEBI:29101"/>
    </ligand>
</feature>
<feature type="binding site" evidence="1">
    <location>
        <position position="168"/>
    </location>
    <ligand>
        <name>Na(+)</name>
        <dbReference type="ChEBI" id="CHEBI:29101"/>
    </ligand>
</feature>
<feature type="binding site" evidence="1">
    <location>
        <position position="171"/>
    </location>
    <ligand>
        <name>Na(+)</name>
        <dbReference type="ChEBI" id="CHEBI:29101"/>
    </ligand>
</feature>